<dbReference type="EC" id="7.1.1.-" evidence="1"/>
<dbReference type="EMBL" id="AF383860">
    <property type="protein sequence ID" value="AAN61801.1"/>
    <property type="molecule type" value="Genomic_DNA"/>
</dbReference>
<dbReference type="SMR" id="Q8HVK3"/>
<dbReference type="GO" id="GO:0009535">
    <property type="term" value="C:chloroplast thylakoid membrane"/>
    <property type="evidence" value="ECO:0007669"/>
    <property type="project" value="UniProtKB-SubCell"/>
</dbReference>
<dbReference type="GO" id="GO:0051539">
    <property type="term" value="F:4 iron, 4 sulfur cluster binding"/>
    <property type="evidence" value="ECO:0007669"/>
    <property type="project" value="UniProtKB-KW"/>
</dbReference>
<dbReference type="GO" id="GO:0005506">
    <property type="term" value="F:iron ion binding"/>
    <property type="evidence" value="ECO:0007669"/>
    <property type="project" value="UniProtKB-UniRule"/>
</dbReference>
<dbReference type="GO" id="GO:0008137">
    <property type="term" value="F:NADH dehydrogenase (ubiquinone) activity"/>
    <property type="evidence" value="ECO:0007669"/>
    <property type="project" value="InterPro"/>
</dbReference>
<dbReference type="GO" id="GO:0048038">
    <property type="term" value="F:quinone binding"/>
    <property type="evidence" value="ECO:0007669"/>
    <property type="project" value="UniProtKB-KW"/>
</dbReference>
<dbReference type="GO" id="GO:0019684">
    <property type="term" value="P:photosynthesis, light reaction"/>
    <property type="evidence" value="ECO:0007669"/>
    <property type="project" value="UniProtKB-UniRule"/>
</dbReference>
<dbReference type="FunFam" id="3.30.70.3270:FF:000006">
    <property type="entry name" value="NAD(P)H-quinone oxidoreductase subunit I, chloroplastic"/>
    <property type="match status" value="1"/>
</dbReference>
<dbReference type="Gene3D" id="3.30.70.3270">
    <property type="match status" value="1"/>
</dbReference>
<dbReference type="HAMAP" id="MF_01351">
    <property type="entry name" value="NDH1_NuoI"/>
    <property type="match status" value="1"/>
</dbReference>
<dbReference type="InterPro" id="IPR017896">
    <property type="entry name" value="4Fe4S_Fe-S-bd"/>
</dbReference>
<dbReference type="InterPro" id="IPR017900">
    <property type="entry name" value="4Fe4S_Fe_S_CS"/>
</dbReference>
<dbReference type="InterPro" id="IPR010226">
    <property type="entry name" value="NADH_quinone_OxRdtase_chainI"/>
</dbReference>
<dbReference type="InterPro" id="IPR004497">
    <property type="entry name" value="NDHI"/>
</dbReference>
<dbReference type="NCBIfam" id="TIGR00403">
    <property type="entry name" value="ndhI"/>
    <property type="match status" value="1"/>
</dbReference>
<dbReference type="NCBIfam" id="TIGR01971">
    <property type="entry name" value="NuoI"/>
    <property type="match status" value="1"/>
</dbReference>
<dbReference type="NCBIfam" id="NF004537">
    <property type="entry name" value="PRK05888.1-3"/>
    <property type="match status" value="1"/>
</dbReference>
<dbReference type="PANTHER" id="PTHR47275">
    <property type="entry name" value="NAD(P)H-QUINONE OXIDOREDUCTASE SUBUNIT I, CHLOROPLASTIC"/>
    <property type="match status" value="1"/>
</dbReference>
<dbReference type="PANTHER" id="PTHR47275:SF1">
    <property type="entry name" value="NAD(P)H-QUINONE OXIDOREDUCTASE SUBUNIT I, CHLOROPLASTIC"/>
    <property type="match status" value="1"/>
</dbReference>
<dbReference type="Pfam" id="PF00037">
    <property type="entry name" value="Fer4"/>
    <property type="match status" value="2"/>
</dbReference>
<dbReference type="SUPFAM" id="SSF54862">
    <property type="entry name" value="4Fe-4S ferredoxins"/>
    <property type="match status" value="1"/>
</dbReference>
<dbReference type="PROSITE" id="PS00198">
    <property type="entry name" value="4FE4S_FER_1"/>
    <property type="match status" value="2"/>
</dbReference>
<dbReference type="PROSITE" id="PS51379">
    <property type="entry name" value="4FE4S_FER_2"/>
    <property type="match status" value="2"/>
</dbReference>
<organism>
    <name type="scientific">Tetragonotheca repanda</name>
    <name type="common">Showy nerveray</name>
    <name type="synonym">Halea repanda</name>
    <dbReference type="NCBI Taxonomy" id="183089"/>
    <lineage>
        <taxon>Eukaryota</taxon>
        <taxon>Viridiplantae</taxon>
        <taxon>Streptophyta</taxon>
        <taxon>Embryophyta</taxon>
        <taxon>Tracheophyta</taxon>
        <taxon>Spermatophyta</taxon>
        <taxon>Magnoliopsida</taxon>
        <taxon>eudicotyledons</taxon>
        <taxon>Gunneridae</taxon>
        <taxon>Pentapetalae</taxon>
        <taxon>asterids</taxon>
        <taxon>campanulids</taxon>
        <taxon>Asterales</taxon>
        <taxon>Asteraceae</taxon>
        <taxon>Asteroideae</taxon>
        <taxon>Heliantheae alliance</taxon>
        <taxon>Millerieae</taxon>
        <taxon>Tetragonotheca</taxon>
    </lineage>
</organism>
<keyword id="KW-0004">4Fe-4S</keyword>
<keyword id="KW-0150">Chloroplast</keyword>
<keyword id="KW-0408">Iron</keyword>
<keyword id="KW-0411">Iron-sulfur</keyword>
<keyword id="KW-0472">Membrane</keyword>
<keyword id="KW-0479">Metal-binding</keyword>
<keyword id="KW-0520">NAD</keyword>
<keyword id="KW-0521">NADP</keyword>
<keyword id="KW-0934">Plastid</keyword>
<keyword id="KW-0618">Plastoquinone</keyword>
<keyword id="KW-0874">Quinone</keyword>
<keyword id="KW-0677">Repeat</keyword>
<keyword id="KW-0793">Thylakoid</keyword>
<keyword id="KW-1278">Translocase</keyword>
<feature type="chain" id="PRO_0000250858" description="NAD(P)H-quinone oxidoreductase subunit I, chloroplastic">
    <location>
        <begin position="1"/>
        <end position="166"/>
    </location>
</feature>
<feature type="domain" description="4Fe-4S ferredoxin-type 1" evidence="1">
    <location>
        <begin position="55"/>
        <end position="84"/>
    </location>
</feature>
<feature type="domain" description="4Fe-4S ferredoxin-type 2" evidence="1">
    <location>
        <begin position="95"/>
        <end position="124"/>
    </location>
</feature>
<feature type="binding site" evidence="1">
    <location>
        <position position="64"/>
    </location>
    <ligand>
        <name>[4Fe-4S] cluster</name>
        <dbReference type="ChEBI" id="CHEBI:49883"/>
        <label>1</label>
    </ligand>
</feature>
<feature type="binding site" evidence="1">
    <location>
        <position position="67"/>
    </location>
    <ligand>
        <name>[4Fe-4S] cluster</name>
        <dbReference type="ChEBI" id="CHEBI:49883"/>
        <label>1</label>
    </ligand>
</feature>
<feature type="binding site" evidence="1">
    <location>
        <position position="70"/>
    </location>
    <ligand>
        <name>[4Fe-4S] cluster</name>
        <dbReference type="ChEBI" id="CHEBI:49883"/>
        <label>1</label>
    </ligand>
</feature>
<feature type="binding site" evidence="1">
    <location>
        <position position="74"/>
    </location>
    <ligand>
        <name>[4Fe-4S] cluster</name>
        <dbReference type="ChEBI" id="CHEBI:49883"/>
        <label>2</label>
    </ligand>
</feature>
<feature type="binding site" evidence="1">
    <location>
        <position position="104"/>
    </location>
    <ligand>
        <name>[4Fe-4S] cluster</name>
        <dbReference type="ChEBI" id="CHEBI:49883"/>
        <label>2</label>
    </ligand>
</feature>
<feature type="binding site" evidence="1">
    <location>
        <position position="107"/>
    </location>
    <ligand>
        <name>[4Fe-4S] cluster</name>
        <dbReference type="ChEBI" id="CHEBI:49883"/>
        <label>2</label>
    </ligand>
</feature>
<feature type="binding site" evidence="1">
    <location>
        <position position="110"/>
    </location>
    <ligand>
        <name>[4Fe-4S] cluster</name>
        <dbReference type="ChEBI" id="CHEBI:49883"/>
        <label>2</label>
    </ligand>
</feature>
<feature type="binding site" evidence="1">
    <location>
        <position position="114"/>
    </location>
    <ligand>
        <name>[4Fe-4S] cluster</name>
        <dbReference type="ChEBI" id="CHEBI:49883"/>
        <label>1</label>
    </ligand>
</feature>
<gene>
    <name evidence="1" type="primary">ndhI</name>
</gene>
<protein>
    <recommendedName>
        <fullName evidence="1">NAD(P)H-quinone oxidoreductase subunit I, chloroplastic</fullName>
        <ecNumber evidence="1">7.1.1.-</ecNumber>
    </recommendedName>
    <alternativeName>
        <fullName evidence="1">NAD(P)H dehydrogenase subunit I</fullName>
        <shortName evidence="1">NDH subunit I</shortName>
    </alternativeName>
    <alternativeName>
        <fullName evidence="1">NADH-plastoquinone oxidoreductase subunit I</fullName>
    </alternativeName>
</protein>
<name>NDHI_TETRE</name>
<evidence type="ECO:0000255" key="1">
    <source>
        <dbReference type="HAMAP-Rule" id="MF_01351"/>
    </source>
</evidence>
<accession>Q8HVK3</accession>
<proteinExistence type="inferred from homology"/>
<reference key="1">
    <citation type="submission" date="2003-01" db="EMBL/GenBank/DDBJ databases">
        <title>Chloroplast DNA phylogeny of tribe Heliantheae (Asteraceae).</title>
        <authorList>
            <person name="Panero J.L."/>
            <person name="Baldwin B.G."/>
            <person name="Schilling E.E."/>
            <person name="Clevinger J.A."/>
        </authorList>
    </citation>
    <scope>NUCLEOTIDE SEQUENCE [GENOMIC DNA]</scope>
</reference>
<geneLocation type="chloroplast"/>
<sequence>MFPMVTEFMNYGQQTVRAARYIGQGFMITLSHANRLPVTIQYPYEKLITSERFRGRIHFEFDKCIACEVCVRVCPIDLPVVDWKLETDIRKKRLLNYSIDFGICIFCGNCVEYCPTNCLSMTEEYELSTYDRHELNYNQIALGRLPMSIIDDYTIRTILNLPEIKT</sequence>
<comment type="function">
    <text evidence="1">NDH shuttles electrons from NAD(P)H:plastoquinone, via FMN and iron-sulfur (Fe-S) centers, to quinones in the photosynthetic chain and possibly in a chloroplast respiratory chain. The immediate electron acceptor for the enzyme in this species is believed to be plastoquinone. Couples the redox reaction to proton translocation, and thus conserves the redox energy in a proton gradient.</text>
</comment>
<comment type="catalytic activity">
    <reaction evidence="1">
        <text>a plastoquinone + NADH + (n+1) H(+)(in) = a plastoquinol + NAD(+) + n H(+)(out)</text>
        <dbReference type="Rhea" id="RHEA:42608"/>
        <dbReference type="Rhea" id="RHEA-COMP:9561"/>
        <dbReference type="Rhea" id="RHEA-COMP:9562"/>
        <dbReference type="ChEBI" id="CHEBI:15378"/>
        <dbReference type="ChEBI" id="CHEBI:17757"/>
        <dbReference type="ChEBI" id="CHEBI:57540"/>
        <dbReference type="ChEBI" id="CHEBI:57945"/>
        <dbReference type="ChEBI" id="CHEBI:62192"/>
    </reaction>
</comment>
<comment type="catalytic activity">
    <reaction evidence="1">
        <text>a plastoquinone + NADPH + (n+1) H(+)(in) = a plastoquinol + NADP(+) + n H(+)(out)</text>
        <dbReference type="Rhea" id="RHEA:42612"/>
        <dbReference type="Rhea" id="RHEA-COMP:9561"/>
        <dbReference type="Rhea" id="RHEA-COMP:9562"/>
        <dbReference type="ChEBI" id="CHEBI:15378"/>
        <dbReference type="ChEBI" id="CHEBI:17757"/>
        <dbReference type="ChEBI" id="CHEBI:57783"/>
        <dbReference type="ChEBI" id="CHEBI:58349"/>
        <dbReference type="ChEBI" id="CHEBI:62192"/>
    </reaction>
</comment>
<comment type="cofactor">
    <cofactor evidence="1">
        <name>[4Fe-4S] cluster</name>
        <dbReference type="ChEBI" id="CHEBI:49883"/>
    </cofactor>
    <text evidence="1">Binds 2 [4Fe-4S] clusters per subunit.</text>
</comment>
<comment type="subunit">
    <text evidence="1">NDH is composed of at least 16 different subunits, 5 of which are encoded in the nucleus.</text>
</comment>
<comment type="subcellular location">
    <subcellularLocation>
        <location evidence="1">Plastid</location>
        <location evidence="1">Chloroplast thylakoid membrane</location>
        <topology evidence="1">Peripheral membrane protein</topology>
    </subcellularLocation>
</comment>
<comment type="similarity">
    <text evidence="1">Belongs to the complex I 23 kDa subunit family.</text>
</comment>